<feature type="chain" id="PRO_0000122186" description="Serine--tRNA ligase">
    <location>
        <begin position="1"/>
        <end position="453"/>
    </location>
</feature>
<feature type="binding site" evidence="1">
    <location>
        <begin position="252"/>
        <end position="254"/>
    </location>
    <ligand>
        <name>L-serine</name>
        <dbReference type="ChEBI" id="CHEBI:33384"/>
    </ligand>
</feature>
<feature type="binding site" evidence="1">
    <location>
        <begin position="283"/>
        <end position="285"/>
    </location>
    <ligand>
        <name>ATP</name>
        <dbReference type="ChEBI" id="CHEBI:30616"/>
    </ligand>
</feature>
<feature type="binding site" evidence="1">
    <location>
        <position position="299"/>
    </location>
    <ligand>
        <name>ATP</name>
        <dbReference type="ChEBI" id="CHEBI:30616"/>
    </ligand>
</feature>
<feature type="binding site" evidence="1">
    <location>
        <position position="306"/>
    </location>
    <ligand>
        <name>L-serine</name>
        <dbReference type="ChEBI" id="CHEBI:33384"/>
    </ligand>
</feature>
<feature type="binding site" evidence="1">
    <location>
        <begin position="370"/>
        <end position="373"/>
    </location>
    <ligand>
        <name>ATP</name>
        <dbReference type="ChEBI" id="CHEBI:30616"/>
    </ligand>
</feature>
<feature type="binding site" evidence="1">
    <location>
        <position position="405"/>
    </location>
    <ligand>
        <name>L-serine</name>
        <dbReference type="ChEBI" id="CHEBI:33384"/>
    </ligand>
</feature>
<sequence>MSWSILELVRNNPDKLKEYIKRRFIDVSLVDRAVELDKKWRQTLQEVEKLRHEHNVISSSIPKAKPEERQELIKKAKELLKALEEKEKELDNIENERDNILMQLPNIVDDSAPIGPDETYSVPIRFWGKFKVYEKDEAEFLSQLKGNRVDYEIIHWKPVGHADMLENVLKLGDTKKAAEVSGARFYYLFDDIVWLDIALLNYAIDTMTSKGYTLVLPPYMLRGEVIKSVIDLDTFKDAIYKIENEDLYLIATAEHPIAALYFKEEIPKEKLPLKYVGISPAFRKEAGAANKDLKGIFRVHQFHKVEQFIFSSPEDSWKLHEELIRNAEEIFQGLGLPYRVINIATGDLGACAAKKYDLEVWMPAQAKFREMVSCSNCLDWQAYRMRIRYVEKGGKKGYVHTLNSTAIASTRTITAILENYQREDGVVEIPKVLKKYLEPFSRAPKDYIYPRKE</sequence>
<accession>Q970Y4</accession>
<accession>F9VNE7</accession>
<evidence type="ECO:0000255" key="1">
    <source>
        <dbReference type="HAMAP-Rule" id="MF_00176"/>
    </source>
</evidence>
<organism>
    <name type="scientific">Sulfurisphaera tokodaii (strain DSM 16993 / JCM 10545 / NBRC 100140 / 7)</name>
    <name type="common">Sulfolobus tokodaii</name>
    <dbReference type="NCBI Taxonomy" id="273063"/>
    <lineage>
        <taxon>Archaea</taxon>
        <taxon>Thermoproteota</taxon>
        <taxon>Thermoprotei</taxon>
        <taxon>Sulfolobales</taxon>
        <taxon>Sulfolobaceae</taxon>
        <taxon>Sulfurisphaera</taxon>
    </lineage>
</organism>
<name>SYS_SULTO</name>
<proteinExistence type="inferred from homology"/>
<protein>
    <recommendedName>
        <fullName evidence="1">Serine--tRNA ligase</fullName>
        <ecNumber evidence="1">6.1.1.11</ecNumber>
    </recommendedName>
    <alternativeName>
        <fullName evidence="1">Seryl-tRNA synthetase</fullName>
        <shortName evidence="1">SerRS</shortName>
    </alternativeName>
    <alternativeName>
        <fullName evidence="1">Seryl-tRNA(Ser/Sec) synthetase</fullName>
    </alternativeName>
</protein>
<comment type="function">
    <text evidence="1">Catalyzes the attachment of serine to tRNA(Ser). Is also able to aminoacylate tRNA(Sec) with serine, to form the misacylated tRNA L-seryl-tRNA(Sec), which will be further converted into selenocysteinyl-tRNA(Sec).</text>
</comment>
<comment type="catalytic activity">
    <reaction evidence="1">
        <text>tRNA(Ser) + L-serine + ATP = L-seryl-tRNA(Ser) + AMP + diphosphate + H(+)</text>
        <dbReference type="Rhea" id="RHEA:12292"/>
        <dbReference type="Rhea" id="RHEA-COMP:9669"/>
        <dbReference type="Rhea" id="RHEA-COMP:9703"/>
        <dbReference type="ChEBI" id="CHEBI:15378"/>
        <dbReference type="ChEBI" id="CHEBI:30616"/>
        <dbReference type="ChEBI" id="CHEBI:33019"/>
        <dbReference type="ChEBI" id="CHEBI:33384"/>
        <dbReference type="ChEBI" id="CHEBI:78442"/>
        <dbReference type="ChEBI" id="CHEBI:78533"/>
        <dbReference type="ChEBI" id="CHEBI:456215"/>
        <dbReference type="EC" id="6.1.1.11"/>
    </reaction>
</comment>
<comment type="catalytic activity">
    <reaction evidence="1">
        <text>tRNA(Sec) + L-serine + ATP = L-seryl-tRNA(Sec) + AMP + diphosphate + H(+)</text>
        <dbReference type="Rhea" id="RHEA:42580"/>
        <dbReference type="Rhea" id="RHEA-COMP:9742"/>
        <dbReference type="Rhea" id="RHEA-COMP:10128"/>
        <dbReference type="ChEBI" id="CHEBI:15378"/>
        <dbReference type="ChEBI" id="CHEBI:30616"/>
        <dbReference type="ChEBI" id="CHEBI:33019"/>
        <dbReference type="ChEBI" id="CHEBI:33384"/>
        <dbReference type="ChEBI" id="CHEBI:78442"/>
        <dbReference type="ChEBI" id="CHEBI:78533"/>
        <dbReference type="ChEBI" id="CHEBI:456215"/>
        <dbReference type="EC" id="6.1.1.11"/>
    </reaction>
</comment>
<comment type="pathway">
    <text evidence="1">Aminoacyl-tRNA biosynthesis; selenocysteinyl-tRNA(Sec) biosynthesis; L-seryl-tRNA(Sec) from L-serine and tRNA(Sec): step 1/1.</text>
</comment>
<comment type="subunit">
    <text evidence="1">Homodimer. The tRNA molecule binds across the dimer.</text>
</comment>
<comment type="subcellular location">
    <subcellularLocation>
        <location evidence="1">Cytoplasm</location>
    </subcellularLocation>
</comment>
<comment type="domain">
    <text evidence="1">Consists of two distinct domains, a catalytic core and a N-terminal extension that is involved in tRNA binding.</text>
</comment>
<comment type="similarity">
    <text evidence="1">Belongs to the class-II aminoacyl-tRNA synthetase family. Type-1 seryl-tRNA synthetase subfamily.</text>
</comment>
<keyword id="KW-0030">Aminoacyl-tRNA synthetase</keyword>
<keyword id="KW-0067">ATP-binding</keyword>
<keyword id="KW-0963">Cytoplasm</keyword>
<keyword id="KW-0436">Ligase</keyword>
<keyword id="KW-0547">Nucleotide-binding</keyword>
<keyword id="KW-0648">Protein biosynthesis</keyword>
<keyword id="KW-1185">Reference proteome</keyword>
<dbReference type="EC" id="6.1.1.11" evidence="1"/>
<dbReference type="EMBL" id="BA000023">
    <property type="protein sequence ID" value="BAK54593.1"/>
    <property type="molecule type" value="Genomic_DNA"/>
</dbReference>
<dbReference type="RefSeq" id="WP_010979517.1">
    <property type="nucleotide sequence ID" value="NC_003106.2"/>
</dbReference>
<dbReference type="SMR" id="Q970Y4"/>
<dbReference type="STRING" id="273063.STK_14690"/>
<dbReference type="GeneID" id="1459503"/>
<dbReference type="KEGG" id="sto:STK_14690"/>
<dbReference type="PATRIC" id="fig|273063.9.peg.1674"/>
<dbReference type="eggNOG" id="arCOG00403">
    <property type="taxonomic scope" value="Archaea"/>
</dbReference>
<dbReference type="OrthoDB" id="35932at2157"/>
<dbReference type="UniPathway" id="UPA00906">
    <property type="reaction ID" value="UER00895"/>
</dbReference>
<dbReference type="Proteomes" id="UP000001015">
    <property type="component" value="Chromosome"/>
</dbReference>
<dbReference type="GO" id="GO:0005737">
    <property type="term" value="C:cytoplasm"/>
    <property type="evidence" value="ECO:0007669"/>
    <property type="project" value="UniProtKB-SubCell"/>
</dbReference>
<dbReference type="GO" id="GO:0005524">
    <property type="term" value="F:ATP binding"/>
    <property type="evidence" value="ECO:0007669"/>
    <property type="project" value="UniProtKB-UniRule"/>
</dbReference>
<dbReference type="GO" id="GO:0004828">
    <property type="term" value="F:serine-tRNA ligase activity"/>
    <property type="evidence" value="ECO:0007669"/>
    <property type="project" value="UniProtKB-UniRule"/>
</dbReference>
<dbReference type="GO" id="GO:0016260">
    <property type="term" value="P:selenocysteine biosynthetic process"/>
    <property type="evidence" value="ECO:0007669"/>
    <property type="project" value="UniProtKB-UniRule"/>
</dbReference>
<dbReference type="GO" id="GO:0006434">
    <property type="term" value="P:seryl-tRNA aminoacylation"/>
    <property type="evidence" value="ECO:0007669"/>
    <property type="project" value="UniProtKB-UniRule"/>
</dbReference>
<dbReference type="CDD" id="cd00770">
    <property type="entry name" value="SerRS_core"/>
    <property type="match status" value="1"/>
</dbReference>
<dbReference type="FunFam" id="1.10.287.40:FF:000004">
    <property type="entry name" value="Serine--tRNA ligase"/>
    <property type="match status" value="1"/>
</dbReference>
<dbReference type="FunFam" id="3.30.930.10:FF:000048">
    <property type="entry name" value="Serine--tRNA ligase"/>
    <property type="match status" value="1"/>
</dbReference>
<dbReference type="Gene3D" id="3.30.930.10">
    <property type="entry name" value="Bira Bifunctional Protein, Domain 2"/>
    <property type="match status" value="1"/>
</dbReference>
<dbReference type="Gene3D" id="1.10.287.40">
    <property type="entry name" value="Serine-tRNA synthetase, tRNA binding domain"/>
    <property type="match status" value="1"/>
</dbReference>
<dbReference type="HAMAP" id="MF_00176">
    <property type="entry name" value="Ser_tRNA_synth_type1"/>
    <property type="match status" value="1"/>
</dbReference>
<dbReference type="InterPro" id="IPR002314">
    <property type="entry name" value="aa-tRNA-synt_IIb"/>
</dbReference>
<dbReference type="InterPro" id="IPR006195">
    <property type="entry name" value="aa-tRNA-synth_II"/>
</dbReference>
<dbReference type="InterPro" id="IPR045864">
    <property type="entry name" value="aa-tRNA-synth_II/BPL/LPL"/>
</dbReference>
<dbReference type="InterPro" id="IPR002317">
    <property type="entry name" value="Ser-tRNA-ligase_type_1"/>
</dbReference>
<dbReference type="InterPro" id="IPR015866">
    <property type="entry name" value="Ser-tRNA-synth_1_N"/>
</dbReference>
<dbReference type="InterPro" id="IPR042103">
    <property type="entry name" value="SerRS_1_N_sf"/>
</dbReference>
<dbReference type="InterPro" id="IPR033729">
    <property type="entry name" value="SerRS_core"/>
</dbReference>
<dbReference type="InterPro" id="IPR010978">
    <property type="entry name" value="tRNA-bd_arm"/>
</dbReference>
<dbReference type="NCBIfam" id="TIGR00414">
    <property type="entry name" value="serS"/>
    <property type="match status" value="1"/>
</dbReference>
<dbReference type="PANTHER" id="PTHR11778">
    <property type="entry name" value="SERYL-TRNA SYNTHETASE"/>
    <property type="match status" value="1"/>
</dbReference>
<dbReference type="Pfam" id="PF02403">
    <property type="entry name" value="Seryl_tRNA_N"/>
    <property type="match status" value="1"/>
</dbReference>
<dbReference type="Pfam" id="PF00587">
    <property type="entry name" value="tRNA-synt_2b"/>
    <property type="match status" value="1"/>
</dbReference>
<dbReference type="PIRSF" id="PIRSF001529">
    <property type="entry name" value="Ser-tRNA-synth_IIa"/>
    <property type="match status" value="1"/>
</dbReference>
<dbReference type="PRINTS" id="PR00981">
    <property type="entry name" value="TRNASYNTHSER"/>
</dbReference>
<dbReference type="SUPFAM" id="SSF55681">
    <property type="entry name" value="Class II aaRS and biotin synthetases"/>
    <property type="match status" value="1"/>
</dbReference>
<dbReference type="SUPFAM" id="SSF46589">
    <property type="entry name" value="tRNA-binding arm"/>
    <property type="match status" value="1"/>
</dbReference>
<dbReference type="PROSITE" id="PS50862">
    <property type="entry name" value="AA_TRNA_LIGASE_II"/>
    <property type="match status" value="1"/>
</dbReference>
<reference key="1">
    <citation type="journal article" date="2001" name="DNA Res.">
        <title>Complete genome sequence of an aerobic thermoacidophilic Crenarchaeon, Sulfolobus tokodaii strain7.</title>
        <authorList>
            <person name="Kawarabayasi Y."/>
            <person name="Hino Y."/>
            <person name="Horikawa H."/>
            <person name="Jin-no K."/>
            <person name="Takahashi M."/>
            <person name="Sekine M."/>
            <person name="Baba S."/>
            <person name="Ankai A."/>
            <person name="Kosugi H."/>
            <person name="Hosoyama A."/>
            <person name="Fukui S."/>
            <person name="Nagai Y."/>
            <person name="Nishijima K."/>
            <person name="Otsuka R."/>
            <person name="Nakazawa H."/>
            <person name="Takamiya M."/>
            <person name="Kato Y."/>
            <person name="Yoshizawa T."/>
            <person name="Tanaka T."/>
            <person name="Kudoh Y."/>
            <person name="Yamazaki J."/>
            <person name="Kushida N."/>
            <person name="Oguchi A."/>
            <person name="Aoki K."/>
            <person name="Masuda S."/>
            <person name="Yanagii M."/>
            <person name="Nishimura M."/>
            <person name="Yamagishi A."/>
            <person name="Oshima T."/>
            <person name="Kikuchi H."/>
        </authorList>
    </citation>
    <scope>NUCLEOTIDE SEQUENCE [LARGE SCALE GENOMIC DNA]</scope>
    <source>
        <strain>DSM 16993 / JCM 10545 / NBRC 100140 / 7</strain>
    </source>
</reference>
<gene>
    <name evidence="1" type="primary">serS</name>
    <name type="ordered locus">STK_14690</name>
</gene>